<feature type="chain" id="PRO_0000212865" description="Palmitoyltransferase ZDHHC4">
    <location>
        <begin position="1"/>
        <end position="344"/>
    </location>
</feature>
<feature type="topological domain" description="Lumenal" evidence="11">
    <location>
        <begin position="1"/>
        <end position="2"/>
    </location>
</feature>
<feature type="transmembrane region" description="Helical" evidence="2">
    <location>
        <begin position="3"/>
        <end position="23"/>
    </location>
</feature>
<feature type="topological domain" description="Cytoplasmic" evidence="11">
    <location>
        <begin position="24"/>
        <end position="67"/>
    </location>
</feature>
<feature type="transmembrane region" description="Helical" evidence="2">
    <location>
        <begin position="68"/>
        <end position="88"/>
    </location>
</feature>
<feature type="topological domain" description="Lumenal" evidence="11">
    <location>
        <begin position="89"/>
        <end position="99"/>
    </location>
</feature>
<feature type="transmembrane region" description="Helical" evidence="2">
    <location>
        <begin position="100"/>
        <end position="120"/>
    </location>
</feature>
<feature type="topological domain" description="Cytoplasmic" evidence="11">
    <location>
        <begin position="121"/>
        <end position="192"/>
    </location>
</feature>
<feature type="transmembrane region" description="Helical" evidence="2">
    <location>
        <begin position="193"/>
        <end position="213"/>
    </location>
</feature>
<feature type="topological domain" description="Lumenal" evidence="11">
    <location>
        <begin position="214"/>
        <end position="255"/>
    </location>
</feature>
<feature type="transmembrane region" description="Helical" evidence="2">
    <location>
        <begin position="256"/>
        <end position="276"/>
    </location>
</feature>
<feature type="topological domain" description="Cytoplasmic" evidence="11">
    <location>
        <begin position="277"/>
        <end position="344"/>
    </location>
</feature>
<feature type="domain" description="DHHC" evidence="3">
    <location>
        <begin position="149"/>
        <end position="199"/>
    </location>
</feature>
<feature type="short sequence motif" description="Di-lysine motif" evidence="5">
    <location>
        <begin position="341"/>
        <end position="344"/>
    </location>
</feature>
<feature type="active site" description="S-palmitoyl cysteine intermediate" evidence="3">
    <location>
        <position position="179"/>
    </location>
</feature>
<feature type="sequence variant" id="VAR_023832" description="In dbSNP:rs11559146." evidence="9">
    <original>V</original>
    <variation>M</variation>
    <location>
        <position position="53"/>
    </location>
</feature>
<feature type="sequence variant" id="VAR_036260" description="In a breast cancer sample; somatic mutation." evidence="4">
    <original>P</original>
    <variation>S</variation>
    <location>
        <position position="104"/>
    </location>
</feature>
<feature type="mutagenesis site" description="Complete loss of palmitoyltransferase activity." evidence="7">
    <original>C</original>
    <variation>S</variation>
    <location>
        <position position="179"/>
    </location>
</feature>
<feature type="mutagenesis site" description="Does not affect localization to the endoplasmic reticulum." evidence="5">
    <original>R</original>
    <variation>A</variation>
    <location>
        <position position="340"/>
    </location>
</feature>
<feature type="mutagenesis site" description="Does not affect localization to the endoplasmic reticulum." evidence="5">
    <original>K</original>
    <variation>A</variation>
    <location>
        <position position="341"/>
    </location>
</feature>
<feature type="mutagenesis site" description="Impaired localization to the endoplasmic reticulum." evidence="5">
    <original>K</original>
    <variation>A</variation>
    <location>
        <position position="342"/>
    </location>
</feature>
<feature type="sequence conflict" description="In Ref. 6; BAD97252." evidence="10" ref="6">
    <original>L</original>
    <variation>P</variation>
    <location>
        <position position="33"/>
    </location>
</feature>
<feature type="sequence conflict" description="In Ref. 2; CAB66609 and 4; CAG38542." evidence="10" ref="2 4">
    <original>F</original>
    <variation>I</variation>
    <location>
        <position position="244"/>
    </location>
</feature>
<feature type="sequence conflict" description="In Ref. 2; CAB66609 and 4; CAG38542." evidence="10" ref="2 4">
    <original>F</original>
    <variation>S</variation>
    <location>
        <position position="276"/>
    </location>
</feature>
<feature type="sequence conflict" description="In Ref. 2; CAB66609 and 4; CAG38542." evidence="10" ref="2 4">
    <original>D</original>
    <variation>V</variation>
    <location>
        <position position="294"/>
    </location>
</feature>
<sequence>MDFLVLFLFYLASVLMGLVLICVCSKTHSLKGLARGGAQIFSCIIPECLQRAVHGLLHYLFHTRNHTFIVLHLVLQGMVYTEYTWEVFGYCQELELSLHYLLLPYLLLGVNLFFFTLTCGTNPGIITKANELLFLHVYEFDEVMFPKNVRCSTCDLRKPARSKHCSVCNWCVHRFDHHCVWVNNCIGAWNIRYFLIYVLTLTASAATVAIVSTTFLVHLVVMSDLYQETYIDDLGHLHVMDTVFLIQYLFLTFPRIVFMLGFVVVLSFLLGGYLLFVLYLAATNQTTNEWYRGDWAWCQRCPLVAWPPSAEPQVHRNIHSHGLRSNLQEIFLPAFPCHERKKQE</sequence>
<accession>Q9NPG8</accession>
<accession>A4D2N9</accession>
<accession>Q53EV7</accession>
<accession>Q6FIB5</accession>
<accession>Q9H0R9</accession>
<protein>
    <recommendedName>
        <fullName evidence="10">Palmitoyltransferase ZDHHC4</fullName>
        <ecNumber evidence="7 8 12">2.3.1.225</ecNumber>
    </recommendedName>
    <alternativeName>
        <fullName evidence="13">Zinc finger DHHC domain-containing protein 4</fullName>
        <shortName>DHHC-4</shortName>
    </alternativeName>
    <alternativeName>
        <fullName>Zinc finger protein 374</fullName>
    </alternativeName>
</protein>
<evidence type="ECO:0000250" key="1">
    <source>
        <dbReference type="UniProtKB" id="Q8IUH5"/>
    </source>
</evidence>
<evidence type="ECO:0000255" key="2"/>
<evidence type="ECO:0000255" key="3">
    <source>
        <dbReference type="PROSITE-ProRule" id="PRU00067"/>
    </source>
</evidence>
<evidence type="ECO:0000269" key="4">
    <source>
    </source>
</evidence>
<evidence type="ECO:0000269" key="5">
    <source>
    </source>
</evidence>
<evidence type="ECO:0000269" key="6">
    <source>
    </source>
</evidence>
<evidence type="ECO:0000269" key="7">
    <source>
    </source>
</evidence>
<evidence type="ECO:0000269" key="8">
    <source>
    </source>
</evidence>
<evidence type="ECO:0000269" key="9">
    <source ref="6"/>
</evidence>
<evidence type="ECO:0000305" key="10"/>
<evidence type="ECO:0000305" key="11">
    <source>
    </source>
</evidence>
<evidence type="ECO:0000305" key="12">
    <source>
    </source>
</evidence>
<evidence type="ECO:0000312" key="13">
    <source>
        <dbReference type="HGNC" id="HGNC:18471"/>
    </source>
</evidence>
<keyword id="KW-0012">Acyltransferase</keyword>
<keyword id="KW-1003">Cell membrane</keyword>
<keyword id="KW-0256">Endoplasmic reticulum</keyword>
<keyword id="KW-0333">Golgi apparatus</keyword>
<keyword id="KW-0449">Lipoprotein</keyword>
<keyword id="KW-0472">Membrane</keyword>
<keyword id="KW-0564">Palmitate</keyword>
<keyword id="KW-1267">Proteomics identification</keyword>
<keyword id="KW-1185">Reference proteome</keyword>
<keyword id="KW-0808">Transferase</keyword>
<keyword id="KW-0812">Transmembrane</keyword>
<keyword id="KW-1133">Transmembrane helix</keyword>
<name>ZDHC4_HUMAN</name>
<proteinExistence type="evidence at protein level"/>
<reference key="1">
    <citation type="submission" date="1999-11" db="EMBL/GenBank/DDBJ databases">
        <title>Novel genes expressed in human dendritic cells.</title>
        <authorList>
            <person name="Li Y."/>
            <person name="Peng Y."/>
            <person name="Li N."/>
            <person name="Gu W."/>
            <person name="Han Z."/>
            <person name="Fu G."/>
            <person name="Chen Z."/>
        </authorList>
    </citation>
    <scope>NUCLEOTIDE SEQUENCE [LARGE SCALE MRNA]</scope>
    <source>
        <tissue>Dendritic cell</tissue>
    </source>
</reference>
<reference key="2">
    <citation type="journal article" date="2001" name="Genome Res.">
        <title>Towards a catalog of human genes and proteins: sequencing and analysis of 500 novel complete protein coding human cDNAs.</title>
        <authorList>
            <person name="Wiemann S."/>
            <person name="Weil B."/>
            <person name="Wellenreuther R."/>
            <person name="Gassenhuber J."/>
            <person name="Glassl S."/>
            <person name="Ansorge W."/>
            <person name="Boecher M."/>
            <person name="Bloecker H."/>
            <person name="Bauersachs S."/>
            <person name="Blum H."/>
            <person name="Lauber J."/>
            <person name="Duesterhoeft A."/>
            <person name="Beyer A."/>
            <person name="Koehrer K."/>
            <person name="Strack N."/>
            <person name="Mewes H.-W."/>
            <person name="Ottenwaelder B."/>
            <person name="Obermaier B."/>
            <person name="Tampe J."/>
            <person name="Heubner D."/>
            <person name="Wambutt R."/>
            <person name="Korn B."/>
            <person name="Klein M."/>
            <person name="Poustka A."/>
        </authorList>
    </citation>
    <scope>NUCLEOTIDE SEQUENCE [LARGE SCALE MRNA]</scope>
    <source>
        <tissue>Fetal brain</tissue>
    </source>
</reference>
<reference key="3">
    <citation type="journal article" date="2003" name="Genome Res.">
        <title>The secreted protein discovery initiative (SPDI), a large-scale effort to identify novel human secreted and transmembrane proteins: a bioinformatics assessment.</title>
        <authorList>
            <person name="Clark H.F."/>
            <person name="Gurney A.L."/>
            <person name="Abaya E."/>
            <person name="Baker K."/>
            <person name="Baldwin D.T."/>
            <person name="Brush J."/>
            <person name="Chen J."/>
            <person name="Chow B."/>
            <person name="Chui C."/>
            <person name="Crowley C."/>
            <person name="Currell B."/>
            <person name="Deuel B."/>
            <person name="Dowd P."/>
            <person name="Eaton D."/>
            <person name="Foster J.S."/>
            <person name="Grimaldi C."/>
            <person name="Gu Q."/>
            <person name="Hass P.E."/>
            <person name="Heldens S."/>
            <person name="Huang A."/>
            <person name="Kim H.S."/>
            <person name="Klimowski L."/>
            <person name="Jin Y."/>
            <person name="Johnson S."/>
            <person name="Lee J."/>
            <person name="Lewis L."/>
            <person name="Liao D."/>
            <person name="Mark M.R."/>
            <person name="Robbie E."/>
            <person name="Sanchez C."/>
            <person name="Schoenfeld J."/>
            <person name="Seshagiri S."/>
            <person name="Simmons L."/>
            <person name="Singh J."/>
            <person name="Smith V."/>
            <person name="Stinson J."/>
            <person name="Vagts A."/>
            <person name="Vandlen R.L."/>
            <person name="Watanabe C."/>
            <person name="Wieand D."/>
            <person name="Woods K."/>
            <person name="Xie M.-H."/>
            <person name="Yansura D.G."/>
            <person name="Yi S."/>
            <person name="Yu G."/>
            <person name="Yuan J."/>
            <person name="Zhang M."/>
            <person name="Zhang Z."/>
            <person name="Goddard A.D."/>
            <person name="Wood W.I."/>
            <person name="Godowski P.J."/>
            <person name="Gray A.M."/>
        </authorList>
    </citation>
    <scope>NUCLEOTIDE SEQUENCE [LARGE SCALE MRNA]</scope>
</reference>
<reference key="4">
    <citation type="submission" date="2004-06" db="EMBL/GenBank/DDBJ databases">
        <title>Cloning of human full open reading frames in Gateway(TM) system entry vector (pDONR201).</title>
        <authorList>
            <person name="Ebert L."/>
            <person name="Schick M."/>
            <person name="Neubert P."/>
            <person name="Schatten R."/>
            <person name="Henze S."/>
            <person name="Korn B."/>
        </authorList>
    </citation>
    <scope>NUCLEOTIDE SEQUENCE [LARGE SCALE MRNA]</scope>
</reference>
<reference key="5">
    <citation type="journal article" date="2004" name="Nat. Genet.">
        <title>Complete sequencing and characterization of 21,243 full-length human cDNAs.</title>
        <authorList>
            <person name="Ota T."/>
            <person name="Suzuki Y."/>
            <person name="Nishikawa T."/>
            <person name="Otsuki T."/>
            <person name="Sugiyama T."/>
            <person name="Irie R."/>
            <person name="Wakamatsu A."/>
            <person name="Hayashi K."/>
            <person name="Sato H."/>
            <person name="Nagai K."/>
            <person name="Kimura K."/>
            <person name="Makita H."/>
            <person name="Sekine M."/>
            <person name="Obayashi M."/>
            <person name="Nishi T."/>
            <person name="Shibahara T."/>
            <person name="Tanaka T."/>
            <person name="Ishii S."/>
            <person name="Yamamoto J."/>
            <person name="Saito K."/>
            <person name="Kawai Y."/>
            <person name="Isono Y."/>
            <person name="Nakamura Y."/>
            <person name="Nagahari K."/>
            <person name="Murakami K."/>
            <person name="Yasuda T."/>
            <person name="Iwayanagi T."/>
            <person name="Wagatsuma M."/>
            <person name="Shiratori A."/>
            <person name="Sudo H."/>
            <person name="Hosoiri T."/>
            <person name="Kaku Y."/>
            <person name="Kodaira H."/>
            <person name="Kondo H."/>
            <person name="Sugawara M."/>
            <person name="Takahashi M."/>
            <person name="Kanda K."/>
            <person name="Yokoi T."/>
            <person name="Furuya T."/>
            <person name="Kikkawa E."/>
            <person name="Omura Y."/>
            <person name="Abe K."/>
            <person name="Kamihara K."/>
            <person name="Katsuta N."/>
            <person name="Sato K."/>
            <person name="Tanikawa M."/>
            <person name="Yamazaki M."/>
            <person name="Ninomiya K."/>
            <person name="Ishibashi T."/>
            <person name="Yamashita H."/>
            <person name="Murakawa K."/>
            <person name="Fujimori K."/>
            <person name="Tanai H."/>
            <person name="Kimata M."/>
            <person name="Watanabe M."/>
            <person name="Hiraoka S."/>
            <person name="Chiba Y."/>
            <person name="Ishida S."/>
            <person name="Ono Y."/>
            <person name="Takiguchi S."/>
            <person name="Watanabe S."/>
            <person name="Yosida M."/>
            <person name="Hotuta T."/>
            <person name="Kusano J."/>
            <person name="Kanehori K."/>
            <person name="Takahashi-Fujii A."/>
            <person name="Hara H."/>
            <person name="Tanase T.-O."/>
            <person name="Nomura Y."/>
            <person name="Togiya S."/>
            <person name="Komai F."/>
            <person name="Hara R."/>
            <person name="Takeuchi K."/>
            <person name="Arita M."/>
            <person name="Imose N."/>
            <person name="Musashino K."/>
            <person name="Yuuki H."/>
            <person name="Oshima A."/>
            <person name="Sasaki N."/>
            <person name="Aotsuka S."/>
            <person name="Yoshikawa Y."/>
            <person name="Matsunawa H."/>
            <person name="Ichihara T."/>
            <person name="Shiohata N."/>
            <person name="Sano S."/>
            <person name="Moriya S."/>
            <person name="Momiyama H."/>
            <person name="Satoh N."/>
            <person name="Takami S."/>
            <person name="Terashima Y."/>
            <person name="Suzuki O."/>
            <person name="Nakagawa S."/>
            <person name="Senoh A."/>
            <person name="Mizoguchi H."/>
            <person name="Goto Y."/>
            <person name="Shimizu F."/>
            <person name="Wakebe H."/>
            <person name="Hishigaki H."/>
            <person name="Watanabe T."/>
            <person name="Sugiyama A."/>
            <person name="Takemoto M."/>
            <person name="Kawakami B."/>
            <person name="Yamazaki M."/>
            <person name="Watanabe K."/>
            <person name="Kumagai A."/>
            <person name="Itakura S."/>
            <person name="Fukuzumi Y."/>
            <person name="Fujimori Y."/>
            <person name="Komiyama M."/>
            <person name="Tashiro H."/>
            <person name="Tanigami A."/>
            <person name="Fujiwara T."/>
            <person name="Ono T."/>
            <person name="Yamada K."/>
            <person name="Fujii Y."/>
            <person name="Ozaki K."/>
            <person name="Hirao M."/>
            <person name="Ohmori Y."/>
            <person name="Kawabata A."/>
            <person name="Hikiji T."/>
            <person name="Kobatake N."/>
            <person name="Inagaki H."/>
            <person name="Ikema Y."/>
            <person name="Okamoto S."/>
            <person name="Okitani R."/>
            <person name="Kawakami T."/>
            <person name="Noguchi S."/>
            <person name="Itoh T."/>
            <person name="Shigeta K."/>
            <person name="Senba T."/>
            <person name="Matsumura K."/>
            <person name="Nakajima Y."/>
            <person name="Mizuno T."/>
            <person name="Morinaga M."/>
            <person name="Sasaki M."/>
            <person name="Togashi T."/>
            <person name="Oyama M."/>
            <person name="Hata H."/>
            <person name="Watanabe M."/>
            <person name="Komatsu T."/>
            <person name="Mizushima-Sugano J."/>
            <person name="Satoh T."/>
            <person name="Shirai Y."/>
            <person name="Takahashi Y."/>
            <person name="Nakagawa K."/>
            <person name="Okumura K."/>
            <person name="Nagase T."/>
            <person name="Nomura N."/>
            <person name="Kikuchi H."/>
            <person name="Masuho Y."/>
            <person name="Yamashita R."/>
            <person name="Nakai K."/>
            <person name="Yada T."/>
            <person name="Nakamura Y."/>
            <person name="Ohara O."/>
            <person name="Isogai T."/>
            <person name="Sugano S."/>
        </authorList>
    </citation>
    <scope>NUCLEOTIDE SEQUENCE [LARGE SCALE MRNA]</scope>
</reference>
<reference key="6">
    <citation type="submission" date="2005-04" db="EMBL/GenBank/DDBJ databases">
        <authorList>
            <person name="Totoki Y."/>
            <person name="Toyoda A."/>
            <person name="Takeda T."/>
            <person name="Sakaki Y."/>
            <person name="Tanaka A."/>
            <person name="Yokoyama S."/>
        </authorList>
    </citation>
    <scope>NUCLEOTIDE SEQUENCE [LARGE SCALE MRNA]</scope>
    <scope>VARIANT MET-53</scope>
    <source>
        <tissue>Testis</tissue>
    </source>
</reference>
<reference key="7">
    <citation type="journal article" date="2003" name="Science">
        <title>Human chromosome 7: DNA sequence and biology.</title>
        <authorList>
            <person name="Scherer S.W."/>
            <person name="Cheung J."/>
            <person name="MacDonald J.R."/>
            <person name="Osborne L.R."/>
            <person name="Nakabayashi K."/>
            <person name="Herbrick J.-A."/>
            <person name="Carson A.R."/>
            <person name="Parker-Katiraee L."/>
            <person name="Skaug J."/>
            <person name="Khaja R."/>
            <person name="Zhang J."/>
            <person name="Hudek A.K."/>
            <person name="Li M."/>
            <person name="Haddad M."/>
            <person name="Duggan G.E."/>
            <person name="Fernandez B.A."/>
            <person name="Kanematsu E."/>
            <person name="Gentles S."/>
            <person name="Christopoulos C.C."/>
            <person name="Choufani S."/>
            <person name="Kwasnicka D."/>
            <person name="Zheng X.H."/>
            <person name="Lai Z."/>
            <person name="Nusskern D.R."/>
            <person name="Zhang Q."/>
            <person name="Gu Z."/>
            <person name="Lu F."/>
            <person name="Zeesman S."/>
            <person name="Nowaczyk M.J."/>
            <person name="Teshima I."/>
            <person name="Chitayat D."/>
            <person name="Shuman C."/>
            <person name="Weksberg R."/>
            <person name="Zackai E.H."/>
            <person name="Grebe T.A."/>
            <person name="Cox S.R."/>
            <person name="Kirkpatrick S.J."/>
            <person name="Rahman N."/>
            <person name="Friedman J.M."/>
            <person name="Heng H.H.Q."/>
            <person name="Pelicci P.G."/>
            <person name="Lo-Coco F."/>
            <person name="Belloni E."/>
            <person name="Shaffer L.G."/>
            <person name="Pober B."/>
            <person name="Morton C.C."/>
            <person name="Gusella J.F."/>
            <person name="Bruns G.A.P."/>
            <person name="Korf B.R."/>
            <person name="Quade B.J."/>
            <person name="Ligon A.H."/>
            <person name="Ferguson H."/>
            <person name="Higgins A.W."/>
            <person name="Leach N.T."/>
            <person name="Herrick S.R."/>
            <person name="Lemyre E."/>
            <person name="Farra C.G."/>
            <person name="Kim H.-G."/>
            <person name="Summers A.M."/>
            <person name="Gripp K.W."/>
            <person name="Roberts W."/>
            <person name="Szatmari P."/>
            <person name="Winsor E.J.T."/>
            <person name="Grzeschik K.-H."/>
            <person name="Teebi A."/>
            <person name="Minassian B.A."/>
            <person name="Kere J."/>
            <person name="Armengol L."/>
            <person name="Pujana M.A."/>
            <person name="Estivill X."/>
            <person name="Wilson M.D."/>
            <person name="Koop B.F."/>
            <person name="Tosi S."/>
            <person name="Moore G.E."/>
            <person name="Boright A.P."/>
            <person name="Zlotorynski E."/>
            <person name="Kerem B."/>
            <person name="Kroisel P.M."/>
            <person name="Petek E."/>
            <person name="Oscier D.G."/>
            <person name="Mould S.J."/>
            <person name="Doehner H."/>
            <person name="Doehner K."/>
            <person name="Rommens J.M."/>
            <person name="Vincent J.B."/>
            <person name="Venter J.C."/>
            <person name="Li P.W."/>
            <person name="Mural R.J."/>
            <person name="Adams M.D."/>
            <person name="Tsui L.-C."/>
        </authorList>
    </citation>
    <scope>NUCLEOTIDE SEQUENCE [LARGE SCALE GENOMIC DNA]</scope>
</reference>
<reference key="8">
    <citation type="submission" date="2005-07" db="EMBL/GenBank/DDBJ databases">
        <authorList>
            <person name="Mural R.J."/>
            <person name="Istrail S."/>
            <person name="Sutton G.G."/>
            <person name="Florea L."/>
            <person name="Halpern A.L."/>
            <person name="Mobarry C.M."/>
            <person name="Lippert R."/>
            <person name="Walenz B."/>
            <person name="Shatkay H."/>
            <person name="Dew I."/>
            <person name="Miller J.R."/>
            <person name="Flanigan M.J."/>
            <person name="Edwards N.J."/>
            <person name="Bolanos R."/>
            <person name="Fasulo D."/>
            <person name="Halldorsson B.V."/>
            <person name="Hannenhalli S."/>
            <person name="Turner R."/>
            <person name="Yooseph S."/>
            <person name="Lu F."/>
            <person name="Nusskern D.R."/>
            <person name="Shue B.C."/>
            <person name="Zheng X.H."/>
            <person name="Zhong F."/>
            <person name="Delcher A.L."/>
            <person name="Huson D.H."/>
            <person name="Kravitz S.A."/>
            <person name="Mouchard L."/>
            <person name="Reinert K."/>
            <person name="Remington K.A."/>
            <person name="Clark A.G."/>
            <person name="Waterman M.S."/>
            <person name="Eichler E.E."/>
            <person name="Adams M.D."/>
            <person name="Hunkapiller M.W."/>
            <person name="Myers E.W."/>
            <person name="Venter J.C."/>
        </authorList>
    </citation>
    <scope>NUCLEOTIDE SEQUENCE [LARGE SCALE GENOMIC DNA]</scope>
</reference>
<reference key="9">
    <citation type="journal article" date="2003" name="Nature">
        <title>The DNA sequence of human chromosome 7.</title>
        <authorList>
            <person name="Hillier L.W."/>
            <person name="Fulton R.S."/>
            <person name="Fulton L.A."/>
            <person name="Graves T.A."/>
            <person name="Pepin K.H."/>
            <person name="Wagner-McPherson C."/>
            <person name="Layman D."/>
            <person name="Maas J."/>
            <person name="Jaeger S."/>
            <person name="Walker R."/>
            <person name="Wylie K."/>
            <person name="Sekhon M."/>
            <person name="Becker M.C."/>
            <person name="O'Laughlin M.D."/>
            <person name="Schaller M.E."/>
            <person name="Fewell G.A."/>
            <person name="Delehaunty K.D."/>
            <person name="Miner T.L."/>
            <person name="Nash W.E."/>
            <person name="Cordes M."/>
            <person name="Du H."/>
            <person name="Sun H."/>
            <person name="Edwards J."/>
            <person name="Bradshaw-Cordum H."/>
            <person name="Ali J."/>
            <person name="Andrews S."/>
            <person name="Isak A."/>
            <person name="Vanbrunt A."/>
            <person name="Nguyen C."/>
            <person name="Du F."/>
            <person name="Lamar B."/>
            <person name="Courtney L."/>
            <person name="Kalicki J."/>
            <person name="Ozersky P."/>
            <person name="Bielicki L."/>
            <person name="Scott K."/>
            <person name="Holmes A."/>
            <person name="Harkins R."/>
            <person name="Harris A."/>
            <person name="Strong C.M."/>
            <person name="Hou S."/>
            <person name="Tomlinson C."/>
            <person name="Dauphin-Kohlberg S."/>
            <person name="Kozlowicz-Reilly A."/>
            <person name="Leonard S."/>
            <person name="Rohlfing T."/>
            <person name="Rock S.M."/>
            <person name="Tin-Wollam A.-M."/>
            <person name="Abbott A."/>
            <person name="Minx P."/>
            <person name="Maupin R."/>
            <person name="Strowmatt C."/>
            <person name="Latreille P."/>
            <person name="Miller N."/>
            <person name="Johnson D."/>
            <person name="Murray J."/>
            <person name="Woessner J.P."/>
            <person name="Wendl M.C."/>
            <person name="Yang S.-P."/>
            <person name="Schultz B.R."/>
            <person name="Wallis J.W."/>
            <person name="Spieth J."/>
            <person name="Bieri T.A."/>
            <person name="Nelson J.O."/>
            <person name="Berkowicz N."/>
            <person name="Wohldmann P.E."/>
            <person name="Cook L.L."/>
            <person name="Hickenbotham M.T."/>
            <person name="Eldred J."/>
            <person name="Williams D."/>
            <person name="Bedell J.A."/>
            <person name="Mardis E.R."/>
            <person name="Clifton S.W."/>
            <person name="Chissoe S.L."/>
            <person name="Marra M.A."/>
            <person name="Raymond C."/>
            <person name="Haugen E."/>
            <person name="Gillett W."/>
            <person name="Zhou Y."/>
            <person name="James R."/>
            <person name="Phelps K."/>
            <person name="Iadanoto S."/>
            <person name="Bubb K."/>
            <person name="Simms E."/>
            <person name="Levy R."/>
            <person name="Clendenning J."/>
            <person name="Kaul R."/>
            <person name="Kent W.J."/>
            <person name="Furey T.S."/>
            <person name="Baertsch R.A."/>
            <person name="Brent M.R."/>
            <person name="Keibler E."/>
            <person name="Flicek P."/>
            <person name="Bork P."/>
            <person name="Suyama M."/>
            <person name="Bailey J.A."/>
            <person name="Portnoy M.E."/>
            <person name="Torrents D."/>
            <person name="Chinwalla A.T."/>
            <person name="Gish W.R."/>
            <person name="Eddy S.R."/>
            <person name="McPherson J.D."/>
            <person name="Olson M.V."/>
            <person name="Eichler E.E."/>
            <person name="Green E.D."/>
            <person name="Waterston R.H."/>
            <person name="Wilson R.K."/>
        </authorList>
    </citation>
    <scope>NUCLEOTIDE SEQUENCE [LARGE SCALE GENOMIC DNA]</scope>
</reference>
<reference key="10">
    <citation type="journal article" date="2004" name="Genome Res.">
        <title>The status, quality, and expansion of the NIH full-length cDNA project: the Mammalian Gene Collection (MGC).</title>
        <authorList>
            <consortium name="The MGC Project Team"/>
        </authorList>
    </citation>
    <scope>NUCLEOTIDE SEQUENCE [LARGE SCALE MRNA]</scope>
    <source>
        <tissue>Cervix</tissue>
    </source>
</reference>
<reference key="11">
    <citation type="journal article" date="2011" name="J. Biol. Chem.">
        <title>Endoplasmic reticulum localization of DHHC palmitoyltransferases mediated by lysine-based sorting signals.</title>
        <authorList>
            <person name="Gorleku O.A."/>
            <person name="Barns A.M."/>
            <person name="Prescott G.R."/>
            <person name="Greaves J."/>
            <person name="Chamberlain L.H."/>
        </authorList>
    </citation>
    <scope>SUBCELLULAR LOCATION</scope>
    <scope>TOPOLOGY</scope>
    <scope>DOMAIN</scope>
    <scope>MUTAGENESIS OF ARG-340; LYS-341 AND LYS-342</scope>
</reference>
<reference key="12">
    <citation type="journal article" date="2015" name="PLoS ONE">
        <title>Effect of C-Terminal S-Palmitoylation on D2 Dopamine Receptor Trafficking and Stability.</title>
        <authorList>
            <person name="Ebersole B."/>
            <person name="Petko J."/>
            <person name="Woll M."/>
            <person name="Murakami S."/>
            <person name="Sokolina K."/>
            <person name="Wong V."/>
            <person name="Stagljar I."/>
            <person name="Luescher B."/>
            <person name="Levenson R."/>
        </authorList>
    </citation>
    <scope>FUNCTION</scope>
    <scope>CATALYTIC ACTIVITY</scope>
    <scope>SUBCELLULAR LOCATION</scope>
</reference>
<reference key="13">
    <citation type="journal article" date="2022" name="Oncogenesis">
        <title>GSK3beta palmitoylation mediated by ZDHHC4 promotes tumorigenicity of glioblastoma stem cells in temozolomide-resistant glioblastoma through the EZH2-STAT3 axis.</title>
        <authorList>
            <person name="Zhao C."/>
            <person name="Yu H."/>
            <person name="Fan X."/>
            <person name="Niu W."/>
            <person name="Fan J."/>
            <person name="Sun S."/>
            <person name="Gong M."/>
            <person name="Zhao B."/>
            <person name="Fang Z."/>
            <person name="Chen X."/>
        </authorList>
    </citation>
    <scope>FUNCTION</scope>
    <scope>CATALYTIC ACTIVITY</scope>
    <scope>MUTAGENESIS OF CYS-179</scope>
</reference>
<reference key="14">
    <citation type="journal article" date="2023" name="Mol. Cell">
        <title>CPT1A induction following epigenetic perturbation promotes MAVS palmitoylation and activation to potentiate antitumor immunity.</title>
        <authorList>
            <person name="Zhang G."/>
            <person name="Jiang P."/>
            <person name="Tang W."/>
            <person name="Wang Y."/>
            <person name="Qiu F."/>
            <person name="An J."/>
            <person name="Zheng Y."/>
            <person name="Wu D."/>
            <person name="Zhou J."/>
            <person name="Neculai D."/>
            <person name="Shi Y."/>
            <person name="Sheng W."/>
        </authorList>
    </citation>
    <scope>FUNCTION</scope>
    <scope>CATALYTIC ACTIVITY</scope>
    <scope>SUBCELLULAR LOCATION</scope>
    <scope>INTERACTION WITH CPT1A</scope>
</reference>
<reference key="15">
    <citation type="journal article" date="2006" name="Science">
        <title>The consensus coding sequences of human breast and colorectal cancers.</title>
        <authorList>
            <person name="Sjoeblom T."/>
            <person name="Jones S."/>
            <person name="Wood L.D."/>
            <person name="Parsons D.W."/>
            <person name="Lin J."/>
            <person name="Barber T.D."/>
            <person name="Mandelker D."/>
            <person name="Leary R.J."/>
            <person name="Ptak J."/>
            <person name="Silliman N."/>
            <person name="Szabo S."/>
            <person name="Buckhaults P."/>
            <person name="Farrell C."/>
            <person name="Meeh P."/>
            <person name="Markowitz S.D."/>
            <person name="Willis J."/>
            <person name="Dawson D."/>
            <person name="Willson J.K.V."/>
            <person name="Gazdar A.F."/>
            <person name="Hartigan J."/>
            <person name="Wu L."/>
            <person name="Liu C."/>
            <person name="Parmigiani G."/>
            <person name="Park B.H."/>
            <person name="Bachman K.E."/>
            <person name="Papadopoulos N."/>
            <person name="Vogelstein B."/>
            <person name="Kinzler K.W."/>
            <person name="Velculescu V.E."/>
        </authorList>
    </citation>
    <scope>VARIANT [LARGE SCALE ANALYSIS] SER-104</scope>
</reference>
<gene>
    <name evidence="13" type="primary">ZDHHC4</name>
    <name type="synonym">ZNF374</name>
    <name type="ORF">DC1</name>
    <name type="ORF">UNQ5787/PRO19576</name>
</gene>
<comment type="function">
    <text evidence="6 7 8">Palmitoyltransferase that catalyzes the addition of palmitate onto protein substrates including the D(2) dopamine receptor DRD2, GSK3B or MAVS. Mediates GSK3B palmitoylation to prevent its AKT1-mediated phosphorylation leading to activation of the STAT3 signaling pathway (PubMed:35606353). Also catalyzes MAVS palmitoylation which promotes its stabilization and activation by inhibiting 'Lys-48'- but facilitating 'Lys-63'-linked ubiquitination (PubMed:38016475).</text>
</comment>
<comment type="catalytic activity">
    <reaction evidence="7 8 12">
        <text>L-cysteinyl-[protein] + hexadecanoyl-CoA = S-hexadecanoyl-L-cysteinyl-[protein] + CoA</text>
        <dbReference type="Rhea" id="RHEA:36683"/>
        <dbReference type="Rhea" id="RHEA-COMP:10131"/>
        <dbReference type="Rhea" id="RHEA-COMP:11032"/>
        <dbReference type="ChEBI" id="CHEBI:29950"/>
        <dbReference type="ChEBI" id="CHEBI:57287"/>
        <dbReference type="ChEBI" id="CHEBI:57379"/>
        <dbReference type="ChEBI" id="CHEBI:74151"/>
        <dbReference type="EC" id="2.3.1.225"/>
    </reaction>
    <physiologicalReaction direction="left-to-right" evidence="12">
        <dbReference type="Rhea" id="RHEA:36684"/>
    </physiologicalReaction>
</comment>
<comment type="subunit">
    <text evidence="8">Interacts with CPT1A.</text>
</comment>
<comment type="interaction">
    <interactant intactId="EBI-20009624">
        <id>Q9NPG8</id>
    </interactant>
    <interactant intactId="EBI-4319704">
        <id>Q9NY35</id>
        <label>CLDND1</label>
    </interactant>
    <organismsDiffer>false</organismsDiffer>
    <experiments>3</experiments>
</comment>
<comment type="interaction">
    <interactant intactId="EBI-20009624">
        <id>Q9NPG8</id>
    </interactant>
    <interactant intactId="EBI-11988865">
        <id>A5PKU2</id>
        <label>TUSC5</label>
    </interactant>
    <organismsDiffer>false</organismsDiffer>
    <experiments>3</experiments>
</comment>
<comment type="subcellular location">
    <subcellularLocation>
        <location evidence="5">Endoplasmic reticulum membrane</location>
        <topology evidence="11">Multi-pass membrane protein</topology>
    </subcellularLocation>
    <subcellularLocation>
        <location evidence="6">Golgi apparatus membrane</location>
        <topology evidence="11">Multi-pass membrane protein</topology>
    </subcellularLocation>
    <subcellularLocation>
        <location evidence="6">Cell membrane</location>
        <topology evidence="2">Multi-pass membrane protein</topology>
    </subcellularLocation>
</comment>
<comment type="domain">
    <text evidence="5">The C-terminal di-lysine motif confers endoplasmic reticulum localization.</text>
</comment>
<comment type="domain">
    <text evidence="1">The DHHC domain is required for palmitoyltransferase activity.</text>
</comment>
<comment type="similarity">
    <text evidence="10">Belongs to the DHHC palmitoyltransferase family.</text>
</comment>
<organism>
    <name type="scientific">Homo sapiens</name>
    <name type="common">Human</name>
    <dbReference type="NCBI Taxonomy" id="9606"/>
    <lineage>
        <taxon>Eukaryota</taxon>
        <taxon>Metazoa</taxon>
        <taxon>Chordata</taxon>
        <taxon>Craniata</taxon>
        <taxon>Vertebrata</taxon>
        <taxon>Euteleostomi</taxon>
        <taxon>Mammalia</taxon>
        <taxon>Eutheria</taxon>
        <taxon>Euarchontoglires</taxon>
        <taxon>Primates</taxon>
        <taxon>Haplorrhini</taxon>
        <taxon>Catarrhini</taxon>
        <taxon>Hominidae</taxon>
        <taxon>Homo</taxon>
    </lineage>
</organism>
<dbReference type="EC" id="2.3.1.225" evidence="7 8 12"/>
<dbReference type="EMBL" id="AF201931">
    <property type="protein sequence ID" value="AAF86867.1"/>
    <property type="molecule type" value="mRNA"/>
</dbReference>
<dbReference type="EMBL" id="AL136674">
    <property type="protein sequence ID" value="CAB66609.1"/>
    <property type="molecule type" value="mRNA"/>
</dbReference>
<dbReference type="EMBL" id="AY359090">
    <property type="protein sequence ID" value="AAQ89448.1"/>
    <property type="molecule type" value="mRNA"/>
</dbReference>
<dbReference type="EMBL" id="CR533511">
    <property type="protein sequence ID" value="CAG38542.1"/>
    <property type="molecule type" value="mRNA"/>
</dbReference>
<dbReference type="EMBL" id="AK001341">
    <property type="protein sequence ID" value="BAA91636.1"/>
    <property type="molecule type" value="mRNA"/>
</dbReference>
<dbReference type="EMBL" id="AK223532">
    <property type="protein sequence ID" value="BAD97252.1"/>
    <property type="molecule type" value="mRNA"/>
</dbReference>
<dbReference type="EMBL" id="AC079742">
    <property type="status" value="NOT_ANNOTATED_CDS"/>
    <property type="molecule type" value="Genomic_DNA"/>
</dbReference>
<dbReference type="EMBL" id="CH236963">
    <property type="protein sequence ID" value="EAL23725.1"/>
    <property type="molecule type" value="Genomic_DNA"/>
</dbReference>
<dbReference type="EMBL" id="CH878731">
    <property type="protein sequence ID" value="EAW55023.1"/>
    <property type="molecule type" value="Genomic_DNA"/>
</dbReference>
<dbReference type="EMBL" id="BC001239">
    <property type="protein sequence ID" value="AAH01239.1"/>
    <property type="molecule type" value="mRNA"/>
</dbReference>
<dbReference type="CCDS" id="CCDS5352.1"/>
<dbReference type="RefSeq" id="NP_001127859.1">
    <property type="nucleotide sequence ID" value="NM_001134387.2"/>
</dbReference>
<dbReference type="RefSeq" id="NP_001127860.1">
    <property type="nucleotide sequence ID" value="NM_001134388.2"/>
</dbReference>
<dbReference type="RefSeq" id="NP_001127861.1">
    <property type="nucleotide sequence ID" value="NM_001134389.2"/>
</dbReference>
<dbReference type="RefSeq" id="NP_001358222.1">
    <property type="nucleotide sequence ID" value="NM_001371293.1"/>
</dbReference>
<dbReference type="RefSeq" id="NP_001358223.1">
    <property type="nucleotide sequence ID" value="NM_001371294.1"/>
</dbReference>
<dbReference type="RefSeq" id="NP_001358224.1">
    <property type="nucleotide sequence ID" value="NM_001371295.1"/>
</dbReference>
<dbReference type="RefSeq" id="NP_001358225.1">
    <property type="nucleotide sequence ID" value="NM_001371296.1"/>
</dbReference>
<dbReference type="RefSeq" id="NP_001358226.1">
    <property type="nucleotide sequence ID" value="NM_001371297.1"/>
</dbReference>
<dbReference type="RefSeq" id="NP_060576.1">
    <property type="nucleotide sequence ID" value="NM_018106.4"/>
</dbReference>
<dbReference type="RefSeq" id="XP_005249850.1">
    <property type="nucleotide sequence ID" value="XM_005249793.2"/>
</dbReference>
<dbReference type="RefSeq" id="XP_005249851.1">
    <property type="nucleotide sequence ID" value="XM_005249794.3"/>
</dbReference>
<dbReference type="RefSeq" id="XP_005249852.1">
    <property type="nucleotide sequence ID" value="XM_005249795.2"/>
</dbReference>
<dbReference type="RefSeq" id="XP_005249853.1">
    <property type="nucleotide sequence ID" value="XM_005249796.4"/>
</dbReference>
<dbReference type="RefSeq" id="XP_047276520.1">
    <property type="nucleotide sequence ID" value="XM_047420564.1"/>
</dbReference>
<dbReference type="RefSeq" id="XP_047276521.1">
    <property type="nucleotide sequence ID" value="XM_047420565.1"/>
</dbReference>
<dbReference type="BioGRID" id="120449">
    <property type="interactions" value="9"/>
</dbReference>
<dbReference type="FunCoup" id="Q9NPG8">
    <property type="interactions" value="1011"/>
</dbReference>
<dbReference type="IntAct" id="Q9NPG8">
    <property type="interactions" value="6"/>
</dbReference>
<dbReference type="MINT" id="Q9NPG8"/>
<dbReference type="STRING" id="9606.ENSP00000379934"/>
<dbReference type="iPTMnet" id="Q9NPG8"/>
<dbReference type="PhosphoSitePlus" id="Q9NPG8"/>
<dbReference type="SwissPalm" id="Q9NPG8"/>
<dbReference type="BioMuta" id="ZDHHC4"/>
<dbReference type="DMDM" id="28202108"/>
<dbReference type="jPOST" id="Q9NPG8"/>
<dbReference type="MassIVE" id="Q9NPG8"/>
<dbReference type="PaxDb" id="9606-ENSP00000379934"/>
<dbReference type="PeptideAtlas" id="Q9NPG8"/>
<dbReference type="ProteomicsDB" id="81994"/>
<dbReference type="Pumba" id="Q9NPG8"/>
<dbReference type="Antibodypedia" id="24908">
    <property type="antibodies" value="49 antibodies from 16 providers"/>
</dbReference>
<dbReference type="DNASU" id="55146"/>
<dbReference type="Ensembl" id="ENST00000335965.11">
    <property type="protein sequence ID" value="ENSP00000337475.6"/>
    <property type="gene ID" value="ENSG00000136247.15"/>
</dbReference>
<dbReference type="Ensembl" id="ENST00000396706.2">
    <property type="protein sequence ID" value="ENSP00000379934.2"/>
    <property type="gene ID" value="ENSG00000136247.15"/>
</dbReference>
<dbReference type="Ensembl" id="ENST00000396707.6">
    <property type="protein sequence ID" value="ENSP00000379935.2"/>
    <property type="gene ID" value="ENSG00000136247.15"/>
</dbReference>
<dbReference type="Ensembl" id="ENST00000396709.5">
    <property type="protein sequence ID" value="ENSP00000379937.1"/>
    <property type="gene ID" value="ENSG00000136247.15"/>
</dbReference>
<dbReference type="Ensembl" id="ENST00000396713.6">
    <property type="protein sequence ID" value="ENSP00000379941.2"/>
    <property type="gene ID" value="ENSG00000136247.15"/>
</dbReference>
<dbReference type="Ensembl" id="ENST00000405731.7">
    <property type="protein sequence ID" value="ENSP00000385027.3"/>
    <property type="gene ID" value="ENSG00000136247.15"/>
</dbReference>
<dbReference type="GeneID" id="55146"/>
<dbReference type="KEGG" id="hsa:55146"/>
<dbReference type="MANE-Select" id="ENST00000335965.11">
    <property type="protein sequence ID" value="ENSP00000337475.6"/>
    <property type="RefSeq nucleotide sequence ID" value="NM_001134389.2"/>
    <property type="RefSeq protein sequence ID" value="NP_001127861.1"/>
</dbReference>
<dbReference type="UCSC" id="uc003sqh.4">
    <property type="organism name" value="human"/>
</dbReference>
<dbReference type="AGR" id="HGNC:18471"/>
<dbReference type="CTD" id="55146"/>
<dbReference type="DisGeNET" id="55146"/>
<dbReference type="GeneCards" id="ZDHHC4"/>
<dbReference type="HGNC" id="HGNC:18471">
    <property type="gene designation" value="ZDHHC4"/>
</dbReference>
<dbReference type="HPA" id="ENSG00000136247">
    <property type="expression patterns" value="Low tissue specificity"/>
</dbReference>
<dbReference type="neXtProt" id="NX_Q9NPG8"/>
<dbReference type="OpenTargets" id="ENSG00000136247"/>
<dbReference type="PharmGKB" id="PA38337"/>
<dbReference type="VEuPathDB" id="HostDB:ENSG00000136247"/>
<dbReference type="eggNOG" id="KOG1312">
    <property type="taxonomic scope" value="Eukaryota"/>
</dbReference>
<dbReference type="GeneTree" id="ENSGT00920000149163"/>
<dbReference type="HOGENOM" id="CLU_042181_4_0_1"/>
<dbReference type="InParanoid" id="Q9NPG8"/>
<dbReference type="OMA" id="KNMKCST"/>
<dbReference type="OrthoDB" id="331948at2759"/>
<dbReference type="PAN-GO" id="Q9NPG8">
    <property type="GO annotations" value="5 GO annotations based on evolutionary models"/>
</dbReference>
<dbReference type="PhylomeDB" id="Q9NPG8"/>
<dbReference type="TreeFam" id="TF330931"/>
<dbReference type="BRENDA" id="2.3.1.225">
    <property type="organism ID" value="2681"/>
</dbReference>
<dbReference type="PathwayCommons" id="Q9NPG8"/>
<dbReference type="SignaLink" id="Q9NPG8"/>
<dbReference type="BioGRID-ORCS" id="55146">
    <property type="hits" value="9 hits in 1161 CRISPR screens"/>
</dbReference>
<dbReference type="ChiTaRS" id="ZDHHC4">
    <property type="organism name" value="human"/>
</dbReference>
<dbReference type="GeneWiki" id="ZDHHC4"/>
<dbReference type="GenomeRNAi" id="55146"/>
<dbReference type="Pharos" id="Q9NPG8">
    <property type="development level" value="Tdark"/>
</dbReference>
<dbReference type="PRO" id="PR:Q9NPG8"/>
<dbReference type="Proteomes" id="UP000005640">
    <property type="component" value="Chromosome 7"/>
</dbReference>
<dbReference type="RNAct" id="Q9NPG8">
    <property type="molecule type" value="protein"/>
</dbReference>
<dbReference type="Bgee" id="ENSG00000136247">
    <property type="expression patterns" value="Expressed in left testis and 176 other cell types or tissues"/>
</dbReference>
<dbReference type="ExpressionAtlas" id="Q9NPG8">
    <property type="expression patterns" value="baseline and differential"/>
</dbReference>
<dbReference type="GO" id="GO:0005783">
    <property type="term" value="C:endoplasmic reticulum"/>
    <property type="evidence" value="ECO:0000314"/>
    <property type="project" value="UniProtKB"/>
</dbReference>
<dbReference type="GO" id="GO:0005789">
    <property type="term" value="C:endoplasmic reticulum membrane"/>
    <property type="evidence" value="ECO:0007669"/>
    <property type="project" value="UniProtKB-SubCell"/>
</dbReference>
<dbReference type="GO" id="GO:0005794">
    <property type="term" value="C:Golgi apparatus"/>
    <property type="evidence" value="ECO:0000314"/>
    <property type="project" value="UniProtKB"/>
</dbReference>
<dbReference type="GO" id="GO:0000139">
    <property type="term" value="C:Golgi membrane"/>
    <property type="evidence" value="ECO:0007669"/>
    <property type="project" value="UniProtKB-SubCell"/>
</dbReference>
<dbReference type="GO" id="GO:0005886">
    <property type="term" value="C:plasma membrane"/>
    <property type="evidence" value="ECO:0007669"/>
    <property type="project" value="UniProtKB-SubCell"/>
</dbReference>
<dbReference type="GO" id="GO:0016409">
    <property type="term" value="F:palmitoyltransferase activity"/>
    <property type="evidence" value="ECO:0000314"/>
    <property type="project" value="UniProt"/>
</dbReference>
<dbReference type="GO" id="GO:0019706">
    <property type="term" value="F:protein-cysteine S-palmitoyltransferase activity"/>
    <property type="evidence" value="ECO:0000318"/>
    <property type="project" value="GO_Central"/>
</dbReference>
<dbReference type="GO" id="GO:0045089">
    <property type="term" value="P:positive regulation of innate immune response"/>
    <property type="evidence" value="ECO:0000314"/>
    <property type="project" value="UniProt"/>
</dbReference>
<dbReference type="GO" id="GO:0072659">
    <property type="term" value="P:protein localization to plasma membrane"/>
    <property type="evidence" value="ECO:0000314"/>
    <property type="project" value="UniProt"/>
</dbReference>
<dbReference type="GO" id="GO:0006612">
    <property type="term" value="P:protein targeting to membrane"/>
    <property type="evidence" value="ECO:0000318"/>
    <property type="project" value="GO_Central"/>
</dbReference>
<dbReference type="InterPro" id="IPR001594">
    <property type="entry name" value="Palmitoyltrfase_DHHC"/>
</dbReference>
<dbReference type="InterPro" id="IPR039859">
    <property type="entry name" value="PFA4/ZDH16/20/ERF2-like"/>
</dbReference>
<dbReference type="PANTHER" id="PTHR22883:SF466">
    <property type="entry name" value="PALMITOYLTRANSFERASE ZDHHC4"/>
    <property type="match status" value="1"/>
</dbReference>
<dbReference type="PANTHER" id="PTHR22883">
    <property type="entry name" value="ZINC FINGER DHHC DOMAIN CONTAINING PROTEIN"/>
    <property type="match status" value="1"/>
</dbReference>
<dbReference type="Pfam" id="PF01529">
    <property type="entry name" value="DHHC"/>
    <property type="match status" value="1"/>
</dbReference>
<dbReference type="PROSITE" id="PS50216">
    <property type="entry name" value="DHHC"/>
    <property type="match status" value="1"/>
</dbReference>